<sequence length="92" mass="10258">MARSLKKGPFVHYKLDKKVQENVESGKNSVVKTWSRASMITPDFVGQTIAVHNGRQFVPVYVTENMVGHKLGEFSPTRSFRGHAGAKNKGKK</sequence>
<protein>
    <recommendedName>
        <fullName evidence="1">Small ribosomal subunit protein uS19</fullName>
    </recommendedName>
    <alternativeName>
        <fullName evidence="3">30S ribosomal protein S19</fullName>
    </alternativeName>
</protein>
<comment type="function">
    <text evidence="1">Protein S19 forms a complex with S13 that binds strongly to the 16S ribosomal RNA.</text>
</comment>
<comment type="similarity">
    <text evidence="1">Belongs to the universal ribosomal protein uS19 family.</text>
</comment>
<accession>A5FMZ6</accession>
<keyword id="KW-0687">Ribonucleoprotein</keyword>
<keyword id="KW-0689">Ribosomal protein</keyword>
<keyword id="KW-0694">RNA-binding</keyword>
<keyword id="KW-0699">rRNA-binding</keyword>
<feature type="chain" id="PRO_1000081771" description="Small ribosomal subunit protein uS19">
    <location>
        <begin position="1"/>
        <end position="92"/>
    </location>
</feature>
<feature type="region of interest" description="Disordered" evidence="2">
    <location>
        <begin position="72"/>
        <end position="92"/>
    </location>
</feature>
<feature type="compositionally biased region" description="Basic residues" evidence="2">
    <location>
        <begin position="80"/>
        <end position="92"/>
    </location>
</feature>
<evidence type="ECO:0000255" key="1">
    <source>
        <dbReference type="HAMAP-Rule" id="MF_00531"/>
    </source>
</evidence>
<evidence type="ECO:0000256" key="2">
    <source>
        <dbReference type="SAM" id="MobiDB-lite"/>
    </source>
</evidence>
<evidence type="ECO:0000305" key="3"/>
<dbReference type="EMBL" id="CP000685">
    <property type="protein sequence ID" value="ABQ03429.1"/>
    <property type="molecule type" value="Genomic_DNA"/>
</dbReference>
<dbReference type="RefSeq" id="WP_012022488.1">
    <property type="nucleotide sequence ID" value="NZ_MUGZ01000005.1"/>
</dbReference>
<dbReference type="SMR" id="A5FMZ6"/>
<dbReference type="STRING" id="376686.Fjoh_0393"/>
<dbReference type="KEGG" id="fjo:Fjoh_0393"/>
<dbReference type="eggNOG" id="COG0185">
    <property type="taxonomic scope" value="Bacteria"/>
</dbReference>
<dbReference type="HOGENOM" id="CLU_144911_0_1_10"/>
<dbReference type="OrthoDB" id="9797833at2"/>
<dbReference type="Proteomes" id="UP000006694">
    <property type="component" value="Chromosome"/>
</dbReference>
<dbReference type="GO" id="GO:0005737">
    <property type="term" value="C:cytoplasm"/>
    <property type="evidence" value="ECO:0007669"/>
    <property type="project" value="UniProtKB-ARBA"/>
</dbReference>
<dbReference type="GO" id="GO:0015935">
    <property type="term" value="C:small ribosomal subunit"/>
    <property type="evidence" value="ECO:0007669"/>
    <property type="project" value="InterPro"/>
</dbReference>
<dbReference type="GO" id="GO:0019843">
    <property type="term" value="F:rRNA binding"/>
    <property type="evidence" value="ECO:0007669"/>
    <property type="project" value="UniProtKB-UniRule"/>
</dbReference>
<dbReference type="GO" id="GO:0003735">
    <property type="term" value="F:structural constituent of ribosome"/>
    <property type="evidence" value="ECO:0007669"/>
    <property type="project" value="InterPro"/>
</dbReference>
<dbReference type="GO" id="GO:0000028">
    <property type="term" value="P:ribosomal small subunit assembly"/>
    <property type="evidence" value="ECO:0007669"/>
    <property type="project" value="TreeGrafter"/>
</dbReference>
<dbReference type="GO" id="GO:0006412">
    <property type="term" value="P:translation"/>
    <property type="evidence" value="ECO:0007669"/>
    <property type="project" value="UniProtKB-UniRule"/>
</dbReference>
<dbReference type="FunFam" id="3.30.860.10:FF:000001">
    <property type="entry name" value="30S ribosomal protein S19"/>
    <property type="match status" value="1"/>
</dbReference>
<dbReference type="Gene3D" id="3.30.860.10">
    <property type="entry name" value="30s Ribosomal Protein S19, Chain A"/>
    <property type="match status" value="1"/>
</dbReference>
<dbReference type="HAMAP" id="MF_00531">
    <property type="entry name" value="Ribosomal_uS19"/>
    <property type="match status" value="1"/>
</dbReference>
<dbReference type="InterPro" id="IPR002222">
    <property type="entry name" value="Ribosomal_uS19"/>
</dbReference>
<dbReference type="InterPro" id="IPR005732">
    <property type="entry name" value="Ribosomal_uS19_bac-type"/>
</dbReference>
<dbReference type="InterPro" id="IPR020934">
    <property type="entry name" value="Ribosomal_uS19_CS"/>
</dbReference>
<dbReference type="InterPro" id="IPR023575">
    <property type="entry name" value="Ribosomal_uS19_SF"/>
</dbReference>
<dbReference type="NCBIfam" id="TIGR01050">
    <property type="entry name" value="rpsS_bact"/>
    <property type="match status" value="1"/>
</dbReference>
<dbReference type="PANTHER" id="PTHR11880">
    <property type="entry name" value="RIBOSOMAL PROTEIN S19P FAMILY MEMBER"/>
    <property type="match status" value="1"/>
</dbReference>
<dbReference type="PANTHER" id="PTHR11880:SF8">
    <property type="entry name" value="SMALL RIBOSOMAL SUBUNIT PROTEIN US19M"/>
    <property type="match status" value="1"/>
</dbReference>
<dbReference type="Pfam" id="PF00203">
    <property type="entry name" value="Ribosomal_S19"/>
    <property type="match status" value="1"/>
</dbReference>
<dbReference type="PIRSF" id="PIRSF002144">
    <property type="entry name" value="Ribosomal_S19"/>
    <property type="match status" value="1"/>
</dbReference>
<dbReference type="PRINTS" id="PR00975">
    <property type="entry name" value="RIBOSOMALS19"/>
</dbReference>
<dbReference type="SUPFAM" id="SSF54570">
    <property type="entry name" value="Ribosomal protein S19"/>
    <property type="match status" value="1"/>
</dbReference>
<dbReference type="PROSITE" id="PS00323">
    <property type="entry name" value="RIBOSOMAL_S19"/>
    <property type="match status" value="1"/>
</dbReference>
<name>RS19_FLAJ1</name>
<gene>
    <name evidence="1" type="primary">rpsS</name>
    <name type="ordered locus">Fjoh_0393</name>
</gene>
<proteinExistence type="inferred from homology"/>
<organism>
    <name type="scientific">Flavobacterium johnsoniae (strain ATCC 17061 / DSM 2064 / JCM 8514 / BCRC 14874 / CCUG 350202 / NBRC 14942 / NCIMB 11054 / UW101)</name>
    <name type="common">Cytophaga johnsonae</name>
    <dbReference type="NCBI Taxonomy" id="376686"/>
    <lineage>
        <taxon>Bacteria</taxon>
        <taxon>Pseudomonadati</taxon>
        <taxon>Bacteroidota</taxon>
        <taxon>Flavobacteriia</taxon>
        <taxon>Flavobacteriales</taxon>
        <taxon>Flavobacteriaceae</taxon>
        <taxon>Flavobacterium</taxon>
    </lineage>
</organism>
<reference key="1">
    <citation type="journal article" date="2009" name="Appl. Environ. Microbiol.">
        <title>Novel features of the polysaccharide-digesting gliding bacterium Flavobacterium johnsoniae as revealed by genome sequence analysis.</title>
        <authorList>
            <person name="McBride M.J."/>
            <person name="Xie G."/>
            <person name="Martens E.C."/>
            <person name="Lapidus A."/>
            <person name="Henrissat B."/>
            <person name="Rhodes R.G."/>
            <person name="Goltsman E."/>
            <person name="Wang W."/>
            <person name="Xu J."/>
            <person name="Hunnicutt D.W."/>
            <person name="Staroscik A.M."/>
            <person name="Hoover T.R."/>
            <person name="Cheng Y.Q."/>
            <person name="Stein J.L."/>
        </authorList>
    </citation>
    <scope>NUCLEOTIDE SEQUENCE [LARGE SCALE GENOMIC DNA]</scope>
    <source>
        <strain>ATCC 17061 / DSM 2064 / JCM 8514 / BCRC 14874 / CCUG 350202 / NBRC 14942 / NCIMB 11054 / UW101</strain>
    </source>
</reference>